<proteinExistence type="inferred from homology"/>
<name>RECF_YERE8</name>
<gene>
    <name evidence="1" type="primary">recF</name>
    <name type="ordered locus">YE4171</name>
</gene>
<protein>
    <recommendedName>
        <fullName evidence="1">DNA replication and repair protein RecF</fullName>
    </recommendedName>
</protein>
<comment type="function">
    <text evidence="1">The RecF protein is involved in DNA metabolism; it is required for DNA replication and normal SOS inducibility. RecF binds preferentially to single-stranded, linear DNA. It also seems to bind ATP.</text>
</comment>
<comment type="subcellular location">
    <subcellularLocation>
        <location evidence="1">Cytoplasm</location>
    </subcellularLocation>
</comment>
<comment type="similarity">
    <text evidence="1">Belongs to the RecF family.</text>
</comment>
<reference key="1">
    <citation type="journal article" date="2006" name="PLoS Genet.">
        <title>The complete genome sequence and comparative genome analysis of the high pathogenicity Yersinia enterocolitica strain 8081.</title>
        <authorList>
            <person name="Thomson N.R."/>
            <person name="Howard S."/>
            <person name="Wren B.W."/>
            <person name="Holden M.T.G."/>
            <person name="Crossman L."/>
            <person name="Challis G.L."/>
            <person name="Churcher C."/>
            <person name="Mungall K."/>
            <person name="Brooks K."/>
            <person name="Chillingworth T."/>
            <person name="Feltwell T."/>
            <person name="Abdellah Z."/>
            <person name="Hauser H."/>
            <person name="Jagels K."/>
            <person name="Maddison M."/>
            <person name="Moule S."/>
            <person name="Sanders M."/>
            <person name="Whitehead S."/>
            <person name="Quail M.A."/>
            <person name="Dougan G."/>
            <person name="Parkhill J."/>
            <person name="Prentice M.B."/>
        </authorList>
    </citation>
    <scope>NUCLEOTIDE SEQUENCE [LARGE SCALE GENOMIC DNA]</scope>
    <source>
        <strain>NCTC 13174 / 8081</strain>
    </source>
</reference>
<organism>
    <name type="scientific">Yersinia enterocolitica serotype O:8 / biotype 1B (strain NCTC 13174 / 8081)</name>
    <dbReference type="NCBI Taxonomy" id="393305"/>
    <lineage>
        <taxon>Bacteria</taxon>
        <taxon>Pseudomonadati</taxon>
        <taxon>Pseudomonadota</taxon>
        <taxon>Gammaproteobacteria</taxon>
        <taxon>Enterobacterales</taxon>
        <taxon>Yersiniaceae</taxon>
        <taxon>Yersinia</taxon>
    </lineage>
</organism>
<sequence length="361" mass="40554">MALTRLLIKDFRNIESADLALASGFNFLVGPNGSGKTSVLEAIYTLGHGRAFRSLQAGRVIRHECAEFVLHGRVDANERESSVGLSKSRQGDTKVRIDGTDGHKVAELAQLLPMQLITPEGFTLLNGGPKFRRAFLDWGCFHNEPGFFMAWSNLKRLLKQRNAALRQVSRYTQIRAWDQEIIPLAERISEWRAAYSDAIAADISATCALFLPEFALSFSFQRGWDKESDYGELLERQFVRDRALTYTAVGPHKADFRIRADGTPVEDLLSRGQLKLLMCALRLAQGEFLTRQSGRRCLYLLDDFASELDTGRRRLLAERLKATQAQVFVSAVSAEQVADMVGEKGKMFRVEHGKIEVQPQD</sequence>
<accession>A1JT78</accession>
<feature type="chain" id="PRO_1000048598" description="DNA replication and repair protein RecF">
    <location>
        <begin position="1"/>
        <end position="361"/>
    </location>
</feature>
<feature type="binding site" evidence="1">
    <location>
        <begin position="30"/>
        <end position="37"/>
    </location>
    <ligand>
        <name>ATP</name>
        <dbReference type="ChEBI" id="CHEBI:30616"/>
    </ligand>
</feature>
<keyword id="KW-0067">ATP-binding</keyword>
<keyword id="KW-0963">Cytoplasm</keyword>
<keyword id="KW-0227">DNA damage</keyword>
<keyword id="KW-0234">DNA repair</keyword>
<keyword id="KW-0235">DNA replication</keyword>
<keyword id="KW-0238">DNA-binding</keyword>
<keyword id="KW-0547">Nucleotide-binding</keyword>
<keyword id="KW-0742">SOS response</keyword>
<dbReference type="EMBL" id="AM286415">
    <property type="protein sequence ID" value="CAL14187.1"/>
    <property type="molecule type" value="Genomic_DNA"/>
</dbReference>
<dbReference type="RefSeq" id="WP_011817457.1">
    <property type="nucleotide sequence ID" value="NC_008800.1"/>
</dbReference>
<dbReference type="RefSeq" id="YP_001008305.1">
    <property type="nucleotide sequence ID" value="NC_008800.1"/>
</dbReference>
<dbReference type="SMR" id="A1JT78"/>
<dbReference type="KEGG" id="yen:YE4171"/>
<dbReference type="PATRIC" id="fig|393305.7.peg.4439"/>
<dbReference type="eggNOG" id="COG1195">
    <property type="taxonomic scope" value="Bacteria"/>
</dbReference>
<dbReference type="HOGENOM" id="CLU_040267_0_0_6"/>
<dbReference type="OrthoDB" id="9803889at2"/>
<dbReference type="Proteomes" id="UP000000642">
    <property type="component" value="Chromosome"/>
</dbReference>
<dbReference type="GO" id="GO:0005737">
    <property type="term" value="C:cytoplasm"/>
    <property type="evidence" value="ECO:0007669"/>
    <property type="project" value="UniProtKB-SubCell"/>
</dbReference>
<dbReference type="GO" id="GO:0005524">
    <property type="term" value="F:ATP binding"/>
    <property type="evidence" value="ECO:0007669"/>
    <property type="project" value="UniProtKB-UniRule"/>
</dbReference>
<dbReference type="GO" id="GO:0003697">
    <property type="term" value="F:single-stranded DNA binding"/>
    <property type="evidence" value="ECO:0007669"/>
    <property type="project" value="UniProtKB-UniRule"/>
</dbReference>
<dbReference type="GO" id="GO:0006260">
    <property type="term" value="P:DNA replication"/>
    <property type="evidence" value="ECO:0007669"/>
    <property type="project" value="UniProtKB-UniRule"/>
</dbReference>
<dbReference type="GO" id="GO:0000731">
    <property type="term" value="P:DNA synthesis involved in DNA repair"/>
    <property type="evidence" value="ECO:0007669"/>
    <property type="project" value="TreeGrafter"/>
</dbReference>
<dbReference type="GO" id="GO:0006302">
    <property type="term" value="P:double-strand break repair"/>
    <property type="evidence" value="ECO:0007669"/>
    <property type="project" value="TreeGrafter"/>
</dbReference>
<dbReference type="GO" id="GO:0009432">
    <property type="term" value="P:SOS response"/>
    <property type="evidence" value="ECO:0007669"/>
    <property type="project" value="UniProtKB-UniRule"/>
</dbReference>
<dbReference type="FunFam" id="1.20.1050.90:FF:000001">
    <property type="entry name" value="DNA replication and repair protein RecF"/>
    <property type="match status" value="1"/>
</dbReference>
<dbReference type="Gene3D" id="3.40.50.300">
    <property type="entry name" value="P-loop containing nucleotide triphosphate hydrolases"/>
    <property type="match status" value="1"/>
</dbReference>
<dbReference type="Gene3D" id="1.20.1050.90">
    <property type="entry name" value="RecF/RecN/SMC, N-terminal domain"/>
    <property type="match status" value="1"/>
</dbReference>
<dbReference type="HAMAP" id="MF_00365">
    <property type="entry name" value="RecF"/>
    <property type="match status" value="1"/>
</dbReference>
<dbReference type="InterPro" id="IPR001238">
    <property type="entry name" value="DNA-binding_RecF"/>
</dbReference>
<dbReference type="InterPro" id="IPR018078">
    <property type="entry name" value="DNA-binding_RecF_CS"/>
</dbReference>
<dbReference type="InterPro" id="IPR027417">
    <property type="entry name" value="P-loop_NTPase"/>
</dbReference>
<dbReference type="InterPro" id="IPR003395">
    <property type="entry name" value="RecF/RecN/SMC_N"/>
</dbReference>
<dbReference type="InterPro" id="IPR042174">
    <property type="entry name" value="RecF_2"/>
</dbReference>
<dbReference type="NCBIfam" id="TIGR00611">
    <property type="entry name" value="recf"/>
    <property type="match status" value="1"/>
</dbReference>
<dbReference type="PANTHER" id="PTHR32182">
    <property type="entry name" value="DNA REPLICATION AND REPAIR PROTEIN RECF"/>
    <property type="match status" value="1"/>
</dbReference>
<dbReference type="PANTHER" id="PTHR32182:SF0">
    <property type="entry name" value="DNA REPLICATION AND REPAIR PROTEIN RECF"/>
    <property type="match status" value="1"/>
</dbReference>
<dbReference type="Pfam" id="PF02463">
    <property type="entry name" value="SMC_N"/>
    <property type="match status" value="1"/>
</dbReference>
<dbReference type="SUPFAM" id="SSF52540">
    <property type="entry name" value="P-loop containing nucleoside triphosphate hydrolases"/>
    <property type="match status" value="1"/>
</dbReference>
<dbReference type="PROSITE" id="PS00617">
    <property type="entry name" value="RECF_1"/>
    <property type="match status" value="1"/>
</dbReference>
<dbReference type="PROSITE" id="PS00618">
    <property type="entry name" value="RECF_2"/>
    <property type="match status" value="1"/>
</dbReference>
<evidence type="ECO:0000255" key="1">
    <source>
        <dbReference type="HAMAP-Rule" id="MF_00365"/>
    </source>
</evidence>